<sequence>ADKKIALVGAGNIGGTLAHLIGLKXLL</sequence>
<feature type="chain" id="PRO_0000113466" description="Malate dehydrogenase">
    <location>
        <begin position="1"/>
        <end position="27" status="greater than"/>
    </location>
</feature>
<feature type="binding site" evidence="1">
    <location>
        <begin position="9"/>
        <end position="14"/>
    </location>
    <ligand>
        <name>NAD(+)</name>
        <dbReference type="ChEBI" id="CHEBI:57540"/>
    </ligand>
</feature>
<feature type="non-terminal residue">
    <location>
        <position position="27"/>
    </location>
</feature>
<protein>
    <recommendedName>
        <fullName evidence="2">Malate dehydrogenase</fullName>
        <ecNumber evidence="2">1.1.1.37</ecNumber>
    </recommendedName>
</protein>
<proteinExistence type="evidence at protein level"/>
<gene>
    <name type="primary">mdh</name>
</gene>
<name>MDH_RHORU</name>
<reference key="1">
    <citation type="submission" date="1996-09" db="UniProtKB">
        <authorList>
            <person name="Naterstad K."/>
            <person name="Synstad B."/>
            <person name="Sirevag R."/>
        </authorList>
    </citation>
    <scope>PROTEIN SEQUENCE</scope>
</reference>
<organism>
    <name type="scientific">Rhodospirillum rubrum</name>
    <dbReference type="NCBI Taxonomy" id="1085"/>
    <lineage>
        <taxon>Bacteria</taxon>
        <taxon>Pseudomonadati</taxon>
        <taxon>Pseudomonadota</taxon>
        <taxon>Alphaproteobacteria</taxon>
        <taxon>Rhodospirillales</taxon>
        <taxon>Rhodospirillaceae</taxon>
        <taxon>Rhodospirillum</taxon>
    </lineage>
</organism>
<comment type="function">
    <text evidence="2">Catalyzes the reversible oxidation of malate to oxaloacetate.</text>
</comment>
<comment type="catalytic activity">
    <reaction evidence="2">
        <text>(S)-malate + NAD(+) = oxaloacetate + NADH + H(+)</text>
        <dbReference type="Rhea" id="RHEA:21432"/>
        <dbReference type="ChEBI" id="CHEBI:15378"/>
        <dbReference type="ChEBI" id="CHEBI:15589"/>
        <dbReference type="ChEBI" id="CHEBI:16452"/>
        <dbReference type="ChEBI" id="CHEBI:57540"/>
        <dbReference type="ChEBI" id="CHEBI:57945"/>
        <dbReference type="EC" id="1.1.1.37"/>
    </reaction>
</comment>
<comment type="similarity">
    <text evidence="3">Belongs to the LDH/MDH superfamily. MDH type 3 family.</text>
</comment>
<evidence type="ECO:0000250" key="1">
    <source>
        <dbReference type="UniProtKB" id="P80040"/>
    </source>
</evidence>
<evidence type="ECO:0000250" key="2">
    <source>
        <dbReference type="UniProtKB" id="Q25QU7"/>
    </source>
</evidence>
<evidence type="ECO:0000305" key="3"/>
<dbReference type="EC" id="1.1.1.37" evidence="2"/>
<dbReference type="GO" id="GO:0030060">
    <property type="term" value="F:L-malate dehydrogenase (NAD+) activity"/>
    <property type="evidence" value="ECO:0007669"/>
    <property type="project" value="UniProtKB-EC"/>
</dbReference>
<dbReference type="GO" id="GO:0004471">
    <property type="term" value="F:malate dehydrogenase (decarboxylating) (NAD+) activity"/>
    <property type="evidence" value="ECO:0000314"/>
    <property type="project" value="CACAO"/>
</dbReference>
<dbReference type="GO" id="GO:0006099">
    <property type="term" value="P:tricarboxylic acid cycle"/>
    <property type="evidence" value="ECO:0007669"/>
    <property type="project" value="UniProtKB-KW"/>
</dbReference>
<accession>P80459</accession>
<keyword id="KW-0903">Direct protein sequencing</keyword>
<keyword id="KW-0520">NAD</keyword>
<keyword id="KW-0560">Oxidoreductase</keyword>
<keyword id="KW-0816">Tricarboxylic acid cycle</keyword>